<dbReference type="EC" id="1.14.-.-"/>
<dbReference type="EMBL" id="AB024038">
    <property type="protein sequence ID" value="BAB02438.1"/>
    <property type="molecule type" value="Genomic_DNA"/>
</dbReference>
<dbReference type="EMBL" id="CP002686">
    <property type="protein sequence ID" value="AEE77129.1"/>
    <property type="molecule type" value="Genomic_DNA"/>
</dbReference>
<dbReference type="EMBL" id="BT005891">
    <property type="protein sequence ID" value="AAO64826.1"/>
    <property type="molecule type" value="mRNA"/>
</dbReference>
<dbReference type="RefSeq" id="NP_189248.1">
    <property type="nucleotide sequence ID" value="NM_113524.5"/>
</dbReference>
<dbReference type="SMR" id="Q9LTM4"/>
<dbReference type="BioGRID" id="7549">
    <property type="interactions" value="11"/>
</dbReference>
<dbReference type="FunCoup" id="Q9LTM4">
    <property type="interactions" value="321"/>
</dbReference>
<dbReference type="IntAct" id="Q9LTM4">
    <property type="interactions" value="11"/>
</dbReference>
<dbReference type="STRING" id="3702.Q9LTM4"/>
<dbReference type="PaxDb" id="3702-AT3G26170.1"/>
<dbReference type="ProteomicsDB" id="240499"/>
<dbReference type="EnsemblPlants" id="AT3G26170.1">
    <property type="protein sequence ID" value="AT3G26170.1"/>
    <property type="gene ID" value="AT3G26170"/>
</dbReference>
<dbReference type="GeneID" id="822218"/>
<dbReference type="Gramene" id="AT3G26170.1">
    <property type="protein sequence ID" value="AT3G26170.1"/>
    <property type="gene ID" value="AT3G26170"/>
</dbReference>
<dbReference type="KEGG" id="ath:AT3G26170"/>
<dbReference type="Araport" id="AT3G26170"/>
<dbReference type="TAIR" id="AT3G26170">
    <property type="gene designation" value="CYP71B19"/>
</dbReference>
<dbReference type="eggNOG" id="KOG0156">
    <property type="taxonomic scope" value="Eukaryota"/>
</dbReference>
<dbReference type="HOGENOM" id="CLU_001570_4_1_1"/>
<dbReference type="InParanoid" id="Q9LTM4"/>
<dbReference type="OMA" id="GRSKDHQ"/>
<dbReference type="PhylomeDB" id="Q9LTM4"/>
<dbReference type="BioCyc" id="ARA:AT3G26170-MONOMER"/>
<dbReference type="PRO" id="PR:Q9LTM4"/>
<dbReference type="Proteomes" id="UP000006548">
    <property type="component" value="Chromosome 3"/>
</dbReference>
<dbReference type="ExpressionAtlas" id="Q9LTM4">
    <property type="expression patterns" value="baseline and differential"/>
</dbReference>
<dbReference type="GO" id="GO:0016020">
    <property type="term" value="C:membrane"/>
    <property type="evidence" value="ECO:0007669"/>
    <property type="project" value="UniProtKB-SubCell"/>
</dbReference>
<dbReference type="GO" id="GO:0020037">
    <property type="term" value="F:heme binding"/>
    <property type="evidence" value="ECO:0007669"/>
    <property type="project" value="InterPro"/>
</dbReference>
<dbReference type="GO" id="GO:0005506">
    <property type="term" value="F:iron ion binding"/>
    <property type="evidence" value="ECO:0007669"/>
    <property type="project" value="InterPro"/>
</dbReference>
<dbReference type="GO" id="GO:0004497">
    <property type="term" value="F:monooxygenase activity"/>
    <property type="evidence" value="ECO:0007669"/>
    <property type="project" value="UniProtKB-KW"/>
</dbReference>
<dbReference type="GO" id="GO:0016705">
    <property type="term" value="F:oxidoreductase activity, acting on paired donors, with incorporation or reduction of molecular oxygen"/>
    <property type="evidence" value="ECO:0007669"/>
    <property type="project" value="InterPro"/>
</dbReference>
<dbReference type="CDD" id="cd11072">
    <property type="entry name" value="CYP71-like"/>
    <property type="match status" value="1"/>
</dbReference>
<dbReference type="FunFam" id="1.10.630.10:FF:000011">
    <property type="entry name" value="Cytochrome P450 83B1"/>
    <property type="match status" value="1"/>
</dbReference>
<dbReference type="Gene3D" id="1.10.630.10">
    <property type="entry name" value="Cytochrome P450"/>
    <property type="match status" value="1"/>
</dbReference>
<dbReference type="InterPro" id="IPR001128">
    <property type="entry name" value="Cyt_P450"/>
</dbReference>
<dbReference type="InterPro" id="IPR017972">
    <property type="entry name" value="Cyt_P450_CS"/>
</dbReference>
<dbReference type="InterPro" id="IPR002401">
    <property type="entry name" value="Cyt_P450_E_grp-I"/>
</dbReference>
<dbReference type="InterPro" id="IPR036396">
    <property type="entry name" value="Cyt_P450_sf"/>
</dbReference>
<dbReference type="PANTHER" id="PTHR47955:SF19">
    <property type="entry name" value="CYTOCHROME P450 71A9-LIKE ISOFORM X1"/>
    <property type="match status" value="1"/>
</dbReference>
<dbReference type="PANTHER" id="PTHR47955">
    <property type="entry name" value="CYTOCHROME P450 FAMILY 71 PROTEIN"/>
    <property type="match status" value="1"/>
</dbReference>
<dbReference type="Pfam" id="PF00067">
    <property type="entry name" value="p450"/>
    <property type="match status" value="1"/>
</dbReference>
<dbReference type="PRINTS" id="PR00463">
    <property type="entry name" value="EP450I"/>
</dbReference>
<dbReference type="PRINTS" id="PR00385">
    <property type="entry name" value="P450"/>
</dbReference>
<dbReference type="SUPFAM" id="SSF48264">
    <property type="entry name" value="Cytochrome P450"/>
    <property type="match status" value="1"/>
</dbReference>
<dbReference type="PROSITE" id="PS00086">
    <property type="entry name" value="CYTOCHROME_P450"/>
    <property type="match status" value="1"/>
</dbReference>
<sequence length="502" mass="57519">MAISFLCVFLITFVSLIFFAKKIKRSKWNLPPSPPKFPVIGNLHQIGELPHRSLQHLAERYGPVMLLHFGFVPITVVSSREAAEEVLRTHDLDCCSRPKLVGTRLLSRDFKDIGFTPYGNEWKARRKFALRELFCLKKVQSFRHIREEECNFLVKQLSESAVDRSPVDLSKSLFWLTASILFRVALGQNFHESDFIDKEKIEELVFEAETALASFTCSDFFPVAGLGWLVDWFSGQHKRLNDVFYKLDALFQHVIDDHLNPGRSKEHEDIIDSMLDVIHKQGEDSSLELTIDHIKGFLANIFLAGIDTGAITMIWAVTELVKNPKLIKKVQGDIREQLGSNKERITEEDIEKVPYLKMVIKETFRLHPAAPLILPRETMAHIKVQGYDIPPKRRILVNVSAIGRDPKLWTNPKEFDPERFMDSFVDYRGQHYELLPFGSGRRICPGMPMGIAAVELGLLNLLYFFDWKLPDGMTHKDIDTEEAGTLTIVKKVPLKLVPVRVQ</sequence>
<evidence type="ECO:0000250" key="1"/>
<evidence type="ECO:0000255" key="2"/>
<evidence type="ECO:0000305" key="3"/>
<gene>
    <name type="primary">CYP71B19</name>
    <name type="ordered locus">At3g26170</name>
    <name type="ORF">MTC11.8</name>
</gene>
<comment type="cofactor">
    <cofactor evidence="1">
        <name>heme</name>
        <dbReference type="ChEBI" id="CHEBI:30413"/>
    </cofactor>
</comment>
<comment type="interaction">
    <interactant intactId="EBI-1239070">
        <id>Q9LTM4</id>
    </interactant>
    <interactant intactId="EBI-1236031">
        <id>P59220</id>
        <label>CAM7</label>
    </interactant>
    <organismsDiffer>false</organismsDiffer>
    <experiments>2</experiments>
</comment>
<comment type="subcellular location">
    <subcellularLocation>
        <location evidence="3">Membrane</location>
        <topology evidence="3">Single-pass membrane protein</topology>
    </subcellularLocation>
</comment>
<comment type="similarity">
    <text evidence="3">Belongs to the cytochrome P450 family.</text>
</comment>
<proteinExistence type="evidence at protein level"/>
<reference key="1">
    <citation type="journal article" date="2000" name="DNA Res.">
        <title>Structural analysis of Arabidopsis thaliana chromosome 3. I. Sequence features of the regions of 4,504,864 bp covered by sixty P1 and TAC clones.</title>
        <authorList>
            <person name="Sato S."/>
            <person name="Nakamura Y."/>
            <person name="Kaneko T."/>
            <person name="Katoh T."/>
            <person name="Asamizu E."/>
            <person name="Tabata S."/>
        </authorList>
    </citation>
    <scope>NUCLEOTIDE SEQUENCE [LARGE SCALE GENOMIC DNA]</scope>
    <source>
        <strain>cv. Columbia</strain>
    </source>
</reference>
<reference key="2">
    <citation type="journal article" date="2017" name="Plant J.">
        <title>Araport11: a complete reannotation of the Arabidopsis thaliana reference genome.</title>
        <authorList>
            <person name="Cheng C.Y."/>
            <person name="Krishnakumar V."/>
            <person name="Chan A.P."/>
            <person name="Thibaud-Nissen F."/>
            <person name="Schobel S."/>
            <person name="Town C.D."/>
        </authorList>
    </citation>
    <scope>GENOME REANNOTATION</scope>
    <source>
        <strain>cv. Columbia</strain>
    </source>
</reference>
<reference key="3">
    <citation type="journal article" date="2003" name="Science">
        <title>Empirical analysis of transcriptional activity in the Arabidopsis genome.</title>
        <authorList>
            <person name="Yamada K."/>
            <person name="Lim J."/>
            <person name="Dale J.M."/>
            <person name="Chen H."/>
            <person name="Shinn P."/>
            <person name="Palm C.J."/>
            <person name="Southwick A.M."/>
            <person name="Wu H.C."/>
            <person name="Kim C.J."/>
            <person name="Nguyen M."/>
            <person name="Pham P.K."/>
            <person name="Cheuk R.F."/>
            <person name="Karlin-Newmann G."/>
            <person name="Liu S.X."/>
            <person name="Lam B."/>
            <person name="Sakano H."/>
            <person name="Wu T."/>
            <person name="Yu G."/>
            <person name="Miranda M."/>
            <person name="Quach H.L."/>
            <person name="Tripp M."/>
            <person name="Chang C.H."/>
            <person name="Lee J.M."/>
            <person name="Toriumi M.J."/>
            <person name="Chan M.M."/>
            <person name="Tang C.C."/>
            <person name="Onodera C.S."/>
            <person name="Deng J.M."/>
            <person name="Akiyama K."/>
            <person name="Ansari Y."/>
            <person name="Arakawa T."/>
            <person name="Banh J."/>
            <person name="Banno F."/>
            <person name="Bowser L."/>
            <person name="Brooks S.Y."/>
            <person name="Carninci P."/>
            <person name="Chao Q."/>
            <person name="Choy N."/>
            <person name="Enju A."/>
            <person name="Goldsmith A.D."/>
            <person name="Gurjal M."/>
            <person name="Hansen N.F."/>
            <person name="Hayashizaki Y."/>
            <person name="Johnson-Hopson C."/>
            <person name="Hsuan V.W."/>
            <person name="Iida K."/>
            <person name="Karnes M."/>
            <person name="Khan S."/>
            <person name="Koesema E."/>
            <person name="Ishida J."/>
            <person name="Jiang P.X."/>
            <person name="Jones T."/>
            <person name="Kawai J."/>
            <person name="Kamiya A."/>
            <person name="Meyers C."/>
            <person name="Nakajima M."/>
            <person name="Narusaka M."/>
            <person name="Seki M."/>
            <person name="Sakurai T."/>
            <person name="Satou M."/>
            <person name="Tamse R."/>
            <person name="Vaysberg M."/>
            <person name="Wallender E.K."/>
            <person name="Wong C."/>
            <person name="Yamamura Y."/>
            <person name="Yuan S."/>
            <person name="Shinozaki K."/>
            <person name="Davis R.W."/>
            <person name="Theologis A."/>
            <person name="Ecker J.R."/>
        </authorList>
    </citation>
    <scope>NUCLEOTIDE SEQUENCE [LARGE SCALE MRNA]</scope>
    <source>
        <strain>cv. Columbia</strain>
    </source>
</reference>
<accession>Q9LTM4</accession>
<protein>
    <recommendedName>
        <fullName>Cytochrome P450 71B19</fullName>
        <ecNumber>1.14.-.-</ecNumber>
    </recommendedName>
</protein>
<feature type="chain" id="PRO_0000052096" description="Cytochrome P450 71B19">
    <location>
        <begin position="1"/>
        <end position="502"/>
    </location>
</feature>
<feature type="transmembrane region" description="Helical" evidence="2">
    <location>
        <begin position="1"/>
        <end position="21"/>
    </location>
</feature>
<feature type="binding site" description="axial binding residue" evidence="1">
    <location>
        <position position="444"/>
    </location>
    <ligand>
        <name>heme</name>
        <dbReference type="ChEBI" id="CHEBI:30413"/>
    </ligand>
    <ligandPart>
        <name>Fe</name>
        <dbReference type="ChEBI" id="CHEBI:18248"/>
    </ligandPart>
</feature>
<organism>
    <name type="scientific">Arabidopsis thaliana</name>
    <name type="common">Mouse-ear cress</name>
    <dbReference type="NCBI Taxonomy" id="3702"/>
    <lineage>
        <taxon>Eukaryota</taxon>
        <taxon>Viridiplantae</taxon>
        <taxon>Streptophyta</taxon>
        <taxon>Embryophyta</taxon>
        <taxon>Tracheophyta</taxon>
        <taxon>Spermatophyta</taxon>
        <taxon>Magnoliopsida</taxon>
        <taxon>eudicotyledons</taxon>
        <taxon>Gunneridae</taxon>
        <taxon>Pentapetalae</taxon>
        <taxon>rosids</taxon>
        <taxon>malvids</taxon>
        <taxon>Brassicales</taxon>
        <taxon>Brassicaceae</taxon>
        <taxon>Camelineae</taxon>
        <taxon>Arabidopsis</taxon>
    </lineage>
</organism>
<name>C71BJ_ARATH</name>
<keyword id="KW-0349">Heme</keyword>
<keyword id="KW-0408">Iron</keyword>
<keyword id="KW-0472">Membrane</keyword>
<keyword id="KW-0479">Metal-binding</keyword>
<keyword id="KW-0503">Monooxygenase</keyword>
<keyword id="KW-0560">Oxidoreductase</keyword>
<keyword id="KW-1185">Reference proteome</keyword>
<keyword id="KW-0812">Transmembrane</keyword>
<keyword id="KW-1133">Transmembrane helix</keyword>